<keyword id="KW-1003">Cell membrane</keyword>
<keyword id="KW-0256">Endoplasmic reticulum</keyword>
<keyword id="KW-0333">Golgi apparatus</keyword>
<keyword id="KW-0406">Ion transport</keyword>
<keyword id="KW-0472">Membrane</keyword>
<keyword id="KW-1185">Reference proteome</keyword>
<keyword id="KW-0915">Sodium</keyword>
<keyword id="KW-0739">Sodium transport</keyword>
<keyword id="KW-0769">Symport</keyword>
<keyword id="KW-0812">Transmembrane</keyword>
<keyword id="KW-1133">Transmembrane helix</keyword>
<keyword id="KW-0813">Transport</keyword>
<comment type="function">
    <text evidence="1">Involved in teeth and skeletal development. Has an essential role in the biosynthesis and trafficking of glycosaminoglycans and glycoproteins to produce a proper functioning extracellular matrix. Required for extracellular matrix mineralization. Also involved in the regulation of cellular calcium homeostasis. Does not show transport activity towards bile acids or steroid sulfates (including taurocholate, cholate, chenodeoxycholate, estrone-3-sulfate, dehydroepiandrosterone sulfate (DHEAS) and pregnenolone sulfate).</text>
</comment>
<comment type="subcellular location">
    <subcellularLocation>
        <location evidence="3">Cell membrane</location>
        <topology evidence="5">Multi-pass membrane protein</topology>
    </subcellularLocation>
    <subcellularLocation>
        <location evidence="3">Endoplasmic reticulum membrane</location>
        <topology evidence="5">Multi-pass membrane protein</topology>
    </subcellularLocation>
    <subcellularLocation>
        <location evidence="1">Golgi apparatus membrane</location>
    </subcellularLocation>
</comment>
<comment type="tissue specificity">
    <text evidence="3">Strongly expressed in liver, adrenal gland, small intestine and colon. Moderately expressed in heart, lung, kidney and spleen. Weakly expressed in brain.</text>
</comment>
<comment type="similarity">
    <text evidence="4">Belongs to the bile acid:sodium symporter (BASS) (TC 2.A.28) family.</text>
</comment>
<proteinExistence type="evidence at protein level"/>
<dbReference type="EMBL" id="AY825929">
    <property type="protein sequence ID" value="AAV80712.1"/>
    <property type="molecule type" value="mRNA"/>
</dbReference>
<dbReference type="RefSeq" id="NP_001010948.1">
    <property type="nucleotide sequence ID" value="NM_001010948.2"/>
</dbReference>
<dbReference type="SMR" id="Q5PT50"/>
<dbReference type="FunCoup" id="Q5PT50">
    <property type="interactions" value="1873"/>
</dbReference>
<dbReference type="STRING" id="10116.ENSRNOP00000015985"/>
<dbReference type="PaxDb" id="10116-ENSRNOP00000015985"/>
<dbReference type="Ensembl" id="ENSRNOT00000097147.1">
    <property type="protein sequence ID" value="ENSRNOP00000077134.1"/>
    <property type="gene ID" value="ENSRNOG00000011991.8"/>
</dbReference>
<dbReference type="GeneID" id="291942"/>
<dbReference type="KEGG" id="rno:291942"/>
<dbReference type="UCSC" id="RGD:1564388">
    <property type="organism name" value="rat"/>
</dbReference>
<dbReference type="AGR" id="RGD:1564388"/>
<dbReference type="CTD" id="84068"/>
<dbReference type="RGD" id="1564388">
    <property type="gene designation" value="Slc10a7"/>
</dbReference>
<dbReference type="eggNOG" id="KOG4821">
    <property type="taxonomic scope" value="Eukaryota"/>
</dbReference>
<dbReference type="GeneTree" id="ENSGT00390000011932"/>
<dbReference type="HOGENOM" id="CLU_039013_0_0_1"/>
<dbReference type="InParanoid" id="Q5PT50"/>
<dbReference type="OMA" id="LPIMIYH"/>
<dbReference type="OrthoDB" id="188035at2759"/>
<dbReference type="PhylomeDB" id="Q5PT50"/>
<dbReference type="PRO" id="PR:Q5PT50"/>
<dbReference type="Proteomes" id="UP000002494">
    <property type="component" value="Chromosome 19"/>
</dbReference>
<dbReference type="Bgee" id="ENSRNOG00000011991">
    <property type="expression patterns" value="Expressed in stomach and 19 other cell types or tissues"/>
</dbReference>
<dbReference type="GO" id="GO:0005783">
    <property type="term" value="C:endoplasmic reticulum"/>
    <property type="evidence" value="ECO:0000314"/>
    <property type="project" value="UniProtKB"/>
</dbReference>
<dbReference type="GO" id="GO:0005789">
    <property type="term" value="C:endoplasmic reticulum membrane"/>
    <property type="evidence" value="ECO:0007669"/>
    <property type="project" value="UniProtKB-SubCell"/>
</dbReference>
<dbReference type="GO" id="GO:0005794">
    <property type="term" value="C:Golgi apparatus"/>
    <property type="evidence" value="ECO:0000266"/>
    <property type="project" value="RGD"/>
</dbReference>
<dbReference type="GO" id="GO:0000139">
    <property type="term" value="C:Golgi membrane"/>
    <property type="evidence" value="ECO:0007669"/>
    <property type="project" value="UniProtKB-SubCell"/>
</dbReference>
<dbReference type="GO" id="GO:0005886">
    <property type="term" value="C:plasma membrane"/>
    <property type="evidence" value="ECO:0000314"/>
    <property type="project" value="UniProtKB"/>
</dbReference>
<dbReference type="GO" id="GO:0015125">
    <property type="term" value="F:bile acid transmembrane transporter activity"/>
    <property type="evidence" value="ECO:0000250"/>
    <property type="project" value="UniProtKB"/>
</dbReference>
<dbReference type="GO" id="GO:0015293">
    <property type="term" value="F:symporter activity"/>
    <property type="evidence" value="ECO:0007669"/>
    <property type="project" value="UniProtKB-KW"/>
</dbReference>
<dbReference type="GO" id="GO:0060348">
    <property type="term" value="P:bone development"/>
    <property type="evidence" value="ECO:0000266"/>
    <property type="project" value="RGD"/>
</dbReference>
<dbReference type="GO" id="GO:0030210">
    <property type="term" value="P:heparin proteoglycan biosynthetic process"/>
    <property type="evidence" value="ECO:0000266"/>
    <property type="project" value="RGD"/>
</dbReference>
<dbReference type="GO" id="GO:0006874">
    <property type="term" value="P:intracellular calcium ion homeostasis"/>
    <property type="evidence" value="ECO:0000266"/>
    <property type="project" value="RGD"/>
</dbReference>
<dbReference type="GO" id="GO:0006814">
    <property type="term" value="P:sodium ion transport"/>
    <property type="evidence" value="ECO:0007669"/>
    <property type="project" value="UniProtKB-KW"/>
</dbReference>
<dbReference type="FunFam" id="1.20.1530.20:FF:000008">
    <property type="entry name" value="Sodium/bile acid cotransporter"/>
    <property type="match status" value="1"/>
</dbReference>
<dbReference type="Gene3D" id="1.20.1530.20">
    <property type="match status" value="1"/>
</dbReference>
<dbReference type="InterPro" id="IPR038770">
    <property type="entry name" value="Na+/solute_symporter_sf"/>
</dbReference>
<dbReference type="InterPro" id="IPR016833">
    <property type="entry name" value="Put_Na-Bile_cotransptr"/>
</dbReference>
<dbReference type="PANTHER" id="PTHR18640:SF5">
    <property type="entry name" value="SODIUM_BILE ACID COTRANSPORTER 7"/>
    <property type="match status" value="1"/>
</dbReference>
<dbReference type="PANTHER" id="PTHR18640">
    <property type="entry name" value="SOLUTE CARRIER FAMILY 10 MEMBER 7"/>
    <property type="match status" value="1"/>
</dbReference>
<dbReference type="Pfam" id="PF13593">
    <property type="entry name" value="SBF_like"/>
    <property type="match status" value="1"/>
</dbReference>
<dbReference type="PIRSF" id="PIRSF026166">
    <property type="entry name" value="UCP026166"/>
    <property type="match status" value="1"/>
</dbReference>
<evidence type="ECO:0000250" key="1">
    <source>
        <dbReference type="UniProtKB" id="Q0GE19"/>
    </source>
</evidence>
<evidence type="ECO:0000255" key="2"/>
<evidence type="ECO:0000269" key="3">
    <source>
    </source>
</evidence>
<evidence type="ECO:0000305" key="4"/>
<evidence type="ECO:0000305" key="5">
    <source>
    </source>
</evidence>
<reference key="1">
    <citation type="journal article" date="2007" name="Eur. J. Cell Biol.">
        <title>Molecular and phylogenetic characterization of a novel putative membrane transporter (SLC10A7), conserved in vertebrates and bacteria.</title>
        <authorList>
            <person name="Godoy J.R."/>
            <person name="Fernandes C."/>
            <person name="Doering B."/>
            <person name="Beuerlein K."/>
            <person name="Petzinger E."/>
            <person name="Geyer J."/>
        </authorList>
    </citation>
    <scope>NUCLEOTIDE SEQUENCE [MRNA]</scope>
    <scope>SUBCELLULAR LOCATION</scope>
    <scope>TISSUE SPECIFICITY</scope>
    <scope>TOPOLOGY</scope>
    <source>
        <strain>Wistar</strain>
        <tissue>Colon</tissue>
    </source>
</reference>
<feature type="chain" id="PRO_0000278252" description="Sodium/bile acid cotransporter 7">
    <location>
        <begin position="1"/>
        <end position="340"/>
    </location>
</feature>
<feature type="topological domain" description="Cytoplasmic" evidence="5">
    <location>
        <begin position="1"/>
        <end position="10"/>
    </location>
</feature>
<feature type="transmembrane region" description="Helical" evidence="2">
    <location>
        <begin position="11"/>
        <end position="31"/>
    </location>
</feature>
<feature type="topological domain" description="Extracellular" evidence="5">
    <location>
        <begin position="32"/>
        <end position="37"/>
    </location>
</feature>
<feature type="transmembrane region" description="Helical" evidence="2">
    <location>
        <begin position="38"/>
        <end position="58"/>
    </location>
</feature>
<feature type="topological domain" description="Cytoplasmic" evidence="5">
    <location>
        <begin position="59"/>
        <end position="71"/>
    </location>
</feature>
<feature type="transmembrane region" description="Helical" evidence="2">
    <location>
        <begin position="72"/>
        <end position="92"/>
    </location>
</feature>
<feature type="topological domain" description="Extracellular" evidence="5">
    <location>
        <begin position="93"/>
        <end position="116"/>
    </location>
</feature>
<feature type="transmembrane region" description="Helical" evidence="2">
    <location>
        <begin position="117"/>
        <end position="137"/>
    </location>
</feature>
<feature type="topological domain" description="Cytoplasmic" evidence="5">
    <location>
        <position position="138"/>
    </location>
</feature>
<feature type="transmembrane region" description="Helical" evidence="2">
    <location>
        <begin position="139"/>
        <end position="159"/>
    </location>
</feature>
<feature type="topological domain" description="Extracellular" evidence="5">
    <location>
        <begin position="160"/>
        <end position="163"/>
    </location>
</feature>
<feature type="transmembrane region" description="Helical" evidence="2">
    <location>
        <begin position="164"/>
        <end position="184"/>
    </location>
</feature>
<feature type="topological domain" description="Cytoplasmic" evidence="5">
    <location>
        <begin position="185"/>
        <end position="201"/>
    </location>
</feature>
<feature type="transmembrane region" description="Helical" evidence="2">
    <location>
        <begin position="202"/>
        <end position="222"/>
    </location>
</feature>
<feature type="topological domain" description="Extracellular" evidence="5">
    <location>
        <begin position="223"/>
        <end position="234"/>
    </location>
</feature>
<feature type="transmembrane region" description="Helical" evidence="2">
    <location>
        <begin position="235"/>
        <end position="255"/>
    </location>
</feature>
<feature type="topological domain" description="Cytoplasmic" evidence="5">
    <location>
        <begin position="256"/>
        <end position="270"/>
    </location>
</feature>
<feature type="transmembrane region" description="Helical" evidence="2">
    <location>
        <begin position="271"/>
        <end position="291"/>
    </location>
</feature>
<feature type="topological domain" description="Extracellular" evidence="3">
    <location>
        <begin position="292"/>
        <end position="298"/>
    </location>
</feature>
<feature type="transmembrane region" description="Helical" evidence="2">
    <location>
        <begin position="299"/>
        <end position="319"/>
    </location>
</feature>
<feature type="topological domain" description="Cytoplasmic" evidence="3">
    <location>
        <begin position="320"/>
        <end position="340"/>
    </location>
</feature>
<gene>
    <name type="primary">Slc10a7</name>
    <name type="synonym">P7</name>
</gene>
<accession>Q5PT50</accession>
<name>NTCP7_RAT</name>
<organism>
    <name type="scientific">Rattus norvegicus</name>
    <name type="common">Rat</name>
    <dbReference type="NCBI Taxonomy" id="10116"/>
    <lineage>
        <taxon>Eukaryota</taxon>
        <taxon>Metazoa</taxon>
        <taxon>Chordata</taxon>
        <taxon>Craniata</taxon>
        <taxon>Vertebrata</taxon>
        <taxon>Euteleostomi</taxon>
        <taxon>Mammalia</taxon>
        <taxon>Eutheria</taxon>
        <taxon>Euarchontoglires</taxon>
        <taxon>Glires</taxon>
        <taxon>Rodentia</taxon>
        <taxon>Myomorpha</taxon>
        <taxon>Muroidea</taxon>
        <taxon>Muridae</taxon>
        <taxon>Murinae</taxon>
        <taxon>Rattus</taxon>
    </lineage>
</organism>
<sequence length="340" mass="37316">MRLLERVRKEWFMVGIVVAIGAAKLEPSVGVNGGPLKPEITVSYIAVATIFFNSGLSLKTEELTSALVHLKLHLFIQVFTLAFFPTTIWLFLQLLSVTSINEWLLKGLQTVGCMPPPVSSAVILTKAVGGNEAAAIFNSAFGSFLGIVVTPVLLLLFLGSSSSVPFTSIFSQLFMTVVVPLVIGQIVRRYIKDWLERKKPPFGVVSSSVLLMIIYTTFCDTFSNPNIDLDKFSLILILFIIVSIQLSFMLLTFVFSTRNNSGFTPADTVAIIFCSTHKSLTLGIPMLKIVFAGHEHLSLISLPLLIYHPAQILLGSVLVPTIKSWMVSRQKGVKLTRPTV</sequence>
<protein>
    <recommendedName>
        <fullName>Sodium/bile acid cotransporter 7</fullName>
    </recommendedName>
    <alternativeName>
        <fullName>Na(+)/bile acid cotransporter 7</fullName>
    </alternativeName>
    <alternativeName>
        <fullName>Solute carrier family 10 member 7</fullName>
    </alternativeName>
</protein>